<gene>
    <name type="primary">kms1</name>
    <name type="ORF">SPAC3A11.05c</name>
</gene>
<proteinExistence type="evidence at protein level"/>
<keyword id="KW-0131">Cell cycle</keyword>
<keyword id="KW-0132">Cell division</keyword>
<keyword id="KW-0963">Cytoplasm</keyword>
<keyword id="KW-0206">Cytoskeleton</keyword>
<keyword id="KW-0469">Meiosis</keyword>
<keyword id="KW-1185">Reference proteome</keyword>
<feature type="chain" id="PRO_0000084310" description="Karyogamy meiotic segregation protein 1">
    <location>
        <begin position="1"/>
        <end position="607"/>
    </location>
</feature>
<feature type="region of interest" description="Disordered" evidence="1">
    <location>
        <begin position="83"/>
        <end position="135"/>
    </location>
</feature>
<feature type="compositionally biased region" description="Low complexity" evidence="1">
    <location>
        <begin position="111"/>
        <end position="132"/>
    </location>
</feature>
<organism>
    <name type="scientific">Schizosaccharomyces pombe (strain 972 / ATCC 24843)</name>
    <name type="common">Fission yeast</name>
    <dbReference type="NCBI Taxonomy" id="284812"/>
    <lineage>
        <taxon>Eukaryota</taxon>
        <taxon>Fungi</taxon>
        <taxon>Dikarya</taxon>
        <taxon>Ascomycota</taxon>
        <taxon>Taphrinomycotina</taxon>
        <taxon>Schizosaccharomycetes</taxon>
        <taxon>Schizosaccharomycetales</taxon>
        <taxon>Schizosaccharomycetaceae</taxon>
        <taxon>Schizosaccharomyces</taxon>
    </lineage>
</organism>
<evidence type="ECO:0000256" key="1">
    <source>
        <dbReference type="SAM" id="MobiDB-lite"/>
    </source>
</evidence>
<evidence type="ECO:0000269" key="2">
    <source>
    </source>
</evidence>
<evidence type="ECO:0000269" key="3">
    <source>
    </source>
</evidence>
<evidence type="ECO:0000269" key="4">
    <source>
    </source>
</evidence>
<evidence type="ECO:0000269" key="5">
    <source>
    </source>
</evidence>
<evidence type="ECO:0000269" key="6">
    <source>
    </source>
</evidence>
<evidence type="ECO:0000269" key="7">
    <source>
    </source>
</evidence>
<protein>
    <recommendedName>
        <fullName>Karyogamy meiotic segregation protein 1</fullName>
    </recommendedName>
</protein>
<comment type="function">
    <text evidence="7">Has a role in karyogamy, recombination and segregation during meiosis. Although it has been shown to associate with the spindle pole body it is unlikely to be involved in its formation or maintenance.</text>
</comment>
<comment type="subunit">
    <text evidence="3 5">Interacts with mcp1 and sad1.</text>
</comment>
<comment type="interaction">
    <interactant intactId="EBI-1542265">
        <id>P87245</id>
    </interactant>
    <interactant intactId="EBI-1562149">
        <id>Q10336</id>
        <label>mcp6</label>
    </interactant>
    <organismsDiffer>false</organismsDiffer>
    <experiments>2</experiments>
</comment>
<comment type="interaction">
    <interactant intactId="EBI-1542265">
        <id>P87245</id>
    </interactant>
    <interactant intactId="EBI-929731">
        <id>Q09825</id>
        <label>sad1</label>
    </interactant>
    <organismsDiffer>false</organismsDiffer>
    <experiments>5</experiments>
</comment>
<comment type="interaction">
    <interactant intactId="EBI-1542265">
        <id>P87245</id>
    </interactant>
    <interactant intactId="EBI-1542307">
        <id>O74843</id>
        <label>sif1</label>
    </interactant>
    <organismsDiffer>false</organismsDiffer>
    <experiments>3</experiments>
</comment>
<comment type="interaction">
    <interactant intactId="EBI-1542265">
        <id>P87245</id>
    </interactant>
    <interactant intactId="EBI-1542297">
        <id>O94531</id>
        <label>ufe1</label>
    </interactant>
    <organismsDiffer>false</organismsDiffer>
    <experiments>3</experiments>
</comment>
<comment type="subcellular location">
    <subcellularLocation>
        <location evidence="2 4 6">Cytoplasm</location>
        <location evidence="2 4 6">Cytoskeleton</location>
        <location evidence="2 4 6">Microtubule organizing center</location>
        <location evidence="2 4 6">Spindle pole body</location>
    </subcellularLocation>
    <text>Associates with the spindle pole body (SPB).</text>
</comment>
<comment type="disruption phenotype">
    <text evidence="7">Cells show a distorted structure of the meiotic prophase nucleus but are able to complete mitosis successfully.</text>
</comment>
<dbReference type="EMBL" id="D84439">
    <property type="protein sequence ID" value="BAA20460.1"/>
    <property type="molecule type" value="Genomic_DNA"/>
</dbReference>
<dbReference type="EMBL" id="CU329670">
    <property type="protein sequence ID" value="CAB16381.1"/>
    <property type="molecule type" value="Genomic_DNA"/>
</dbReference>
<dbReference type="PIR" id="T43222">
    <property type="entry name" value="T43222"/>
</dbReference>
<dbReference type="RefSeq" id="NP_594198.1">
    <property type="nucleotide sequence ID" value="NM_001019622.2"/>
</dbReference>
<dbReference type="SMR" id="P87245"/>
<dbReference type="BioGRID" id="279502">
    <property type="interactions" value="15"/>
</dbReference>
<dbReference type="FunCoup" id="P87245">
    <property type="interactions" value="88"/>
</dbReference>
<dbReference type="IntAct" id="P87245">
    <property type="interactions" value="5"/>
</dbReference>
<dbReference type="STRING" id="284812.P87245"/>
<dbReference type="iPTMnet" id="P87245"/>
<dbReference type="PaxDb" id="4896-SPAC3A11.05c.1"/>
<dbReference type="EnsemblFungi" id="SPAC3A11.05c.1">
    <property type="protein sequence ID" value="SPAC3A11.05c.1:pep"/>
    <property type="gene ID" value="SPAC3A11.05c"/>
</dbReference>
<dbReference type="GeneID" id="2543069"/>
<dbReference type="KEGG" id="spo:2543069"/>
<dbReference type="PomBase" id="SPAC3A11.05c">
    <property type="gene designation" value="kms1"/>
</dbReference>
<dbReference type="VEuPathDB" id="FungiDB:SPAC3A11.05c"/>
<dbReference type="HOGENOM" id="CLU_454281_0_0_1"/>
<dbReference type="InParanoid" id="P87245"/>
<dbReference type="OMA" id="EIGIQKW"/>
<dbReference type="PhylomeDB" id="P87245"/>
<dbReference type="CD-CODE" id="576F0A76">
    <property type="entry name" value="Centrosome"/>
</dbReference>
<dbReference type="PRO" id="PR:P87245"/>
<dbReference type="Proteomes" id="UP000002485">
    <property type="component" value="Chromosome I"/>
</dbReference>
<dbReference type="GO" id="GO:0005737">
    <property type="term" value="C:cytoplasm"/>
    <property type="evidence" value="ECO:0007669"/>
    <property type="project" value="UniProtKB-KW"/>
</dbReference>
<dbReference type="GO" id="GO:0031021">
    <property type="term" value="C:interphase microtubule organizing center"/>
    <property type="evidence" value="ECO:0000314"/>
    <property type="project" value="PomBase"/>
</dbReference>
<dbReference type="GO" id="GO:0034993">
    <property type="term" value="C:meiotic nuclear membrane microtubule tethering complex"/>
    <property type="evidence" value="ECO:0000353"/>
    <property type="project" value="PomBase"/>
</dbReference>
<dbReference type="GO" id="GO:0044732">
    <property type="term" value="C:mitotic spindle pole body"/>
    <property type="evidence" value="ECO:0007005"/>
    <property type="project" value="PomBase"/>
</dbReference>
<dbReference type="GO" id="GO:0031965">
    <property type="term" value="C:nuclear membrane"/>
    <property type="evidence" value="ECO:0000305"/>
    <property type="project" value="PomBase"/>
</dbReference>
<dbReference type="GO" id="GO:1990612">
    <property type="term" value="C:Sad1-Kms1 LINC complex"/>
    <property type="evidence" value="ECO:0000269"/>
    <property type="project" value="PomBase"/>
</dbReference>
<dbReference type="GO" id="GO:0051301">
    <property type="term" value="P:cell division"/>
    <property type="evidence" value="ECO:0007669"/>
    <property type="project" value="UniProtKB-KW"/>
</dbReference>
<dbReference type="GO" id="GO:1990683">
    <property type="term" value="P:DNA double-strand break attachment to nuclear envelope"/>
    <property type="evidence" value="ECO:0000269"/>
    <property type="project" value="PomBase"/>
</dbReference>
<dbReference type="GO" id="GO:0045141">
    <property type="term" value="P:meiotic telomere clustering"/>
    <property type="evidence" value="ECO:0000315"/>
    <property type="project" value="PomBase"/>
</dbReference>
<dbReference type="InterPro" id="IPR011992">
    <property type="entry name" value="EF-hand-dom_pair"/>
</dbReference>
<dbReference type="SUPFAM" id="SSF47473">
    <property type="entry name" value="EF-hand"/>
    <property type="match status" value="1"/>
</dbReference>
<name>KMS1_SCHPO</name>
<reference key="1">
    <citation type="journal article" date="1997" name="Mol. Gen. Genet.">
        <title>A novel fission yeast gene, kms1+, is required for the formation of meiotic prophase-specific nuclear architecture.</title>
        <authorList>
            <person name="Shimanuki M."/>
            <person name="Miki F."/>
            <person name="Ding D.-Q."/>
            <person name="Chikashige Y."/>
            <person name="Hiraoka Y."/>
            <person name="Horio T."/>
            <person name="Niwa O."/>
        </authorList>
    </citation>
    <scope>NUCLEOTIDE SEQUENCE [GENOMIC DNA]</scope>
    <scope>FUNCTION</scope>
    <scope>DISRUPTION PHENOTYPE</scope>
</reference>
<reference key="2">
    <citation type="journal article" date="2002" name="Nature">
        <title>The genome sequence of Schizosaccharomyces pombe.</title>
        <authorList>
            <person name="Wood V."/>
            <person name="Gwilliam R."/>
            <person name="Rajandream M.A."/>
            <person name="Lyne M.H."/>
            <person name="Lyne R."/>
            <person name="Stewart A."/>
            <person name="Sgouros J.G."/>
            <person name="Peat N."/>
            <person name="Hayles J."/>
            <person name="Baker S.G."/>
            <person name="Basham D."/>
            <person name="Bowman S."/>
            <person name="Brooks K."/>
            <person name="Brown D."/>
            <person name="Brown S."/>
            <person name="Chillingworth T."/>
            <person name="Churcher C.M."/>
            <person name="Collins M."/>
            <person name="Connor R."/>
            <person name="Cronin A."/>
            <person name="Davis P."/>
            <person name="Feltwell T."/>
            <person name="Fraser A."/>
            <person name="Gentles S."/>
            <person name="Goble A."/>
            <person name="Hamlin N."/>
            <person name="Harris D.E."/>
            <person name="Hidalgo J."/>
            <person name="Hodgson G."/>
            <person name="Holroyd S."/>
            <person name="Hornsby T."/>
            <person name="Howarth S."/>
            <person name="Huckle E.J."/>
            <person name="Hunt S."/>
            <person name="Jagels K."/>
            <person name="James K.D."/>
            <person name="Jones L."/>
            <person name="Jones M."/>
            <person name="Leather S."/>
            <person name="McDonald S."/>
            <person name="McLean J."/>
            <person name="Mooney P."/>
            <person name="Moule S."/>
            <person name="Mungall K.L."/>
            <person name="Murphy L.D."/>
            <person name="Niblett D."/>
            <person name="Odell C."/>
            <person name="Oliver K."/>
            <person name="O'Neil S."/>
            <person name="Pearson D."/>
            <person name="Quail M.A."/>
            <person name="Rabbinowitsch E."/>
            <person name="Rutherford K.M."/>
            <person name="Rutter S."/>
            <person name="Saunders D."/>
            <person name="Seeger K."/>
            <person name="Sharp S."/>
            <person name="Skelton J."/>
            <person name="Simmonds M.N."/>
            <person name="Squares R."/>
            <person name="Squares S."/>
            <person name="Stevens K."/>
            <person name="Taylor K."/>
            <person name="Taylor R.G."/>
            <person name="Tivey A."/>
            <person name="Walsh S.V."/>
            <person name="Warren T."/>
            <person name="Whitehead S."/>
            <person name="Woodward J.R."/>
            <person name="Volckaert G."/>
            <person name="Aert R."/>
            <person name="Robben J."/>
            <person name="Grymonprez B."/>
            <person name="Weltjens I."/>
            <person name="Vanstreels E."/>
            <person name="Rieger M."/>
            <person name="Schaefer M."/>
            <person name="Mueller-Auer S."/>
            <person name="Gabel C."/>
            <person name="Fuchs M."/>
            <person name="Duesterhoeft A."/>
            <person name="Fritzc C."/>
            <person name="Holzer E."/>
            <person name="Moestl D."/>
            <person name="Hilbert H."/>
            <person name="Borzym K."/>
            <person name="Langer I."/>
            <person name="Beck A."/>
            <person name="Lehrach H."/>
            <person name="Reinhardt R."/>
            <person name="Pohl T.M."/>
            <person name="Eger P."/>
            <person name="Zimmermann W."/>
            <person name="Wedler H."/>
            <person name="Wambutt R."/>
            <person name="Purnelle B."/>
            <person name="Goffeau A."/>
            <person name="Cadieu E."/>
            <person name="Dreano S."/>
            <person name="Gloux S."/>
            <person name="Lelaure V."/>
            <person name="Mottier S."/>
            <person name="Galibert F."/>
            <person name="Aves S.J."/>
            <person name="Xiang Z."/>
            <person name="Hunt C."/>
            <person name="Moore K."/>
            <person name="Hurst S.M."/>
            <person name="Lucas M."/>
            <person name="Rochet M."/>
            <person name="Gaillardin C."/>
            <person name="Tallada V.A."/>
            <person name="Garzon A."/>
            <person name="Thode G."/>
            <person name="Daga R.R."/>
            <person name="Cruzado L."/>
            <person name="Jimenez J."/>
            <person name="Sanchez M."/>
            <person name="del Rey F."/>
            <person name="Benito J."/>
            <person name="Dominguez A."/>
            <person name="Revuelta J.L."/>
            <person name="Moreno S."/>
            <person name="Armstrong J."/>
            <person name="Forsburg S.L."/>
            <person name="Cerutti L."/>
            <person name="Lowe T."/>
            <person name="McCombie W.R."/>
            <person name="Paulsen I."/>
            <person name="Potashkin J."/>
            <person name="Shpakovski G.V."/>
            <person name="Ussery D."/>
            <person name="Barrell B.G."/>
            <person name="Nurse P."/>
        </authorList>
    </citation>
    <scope>NUCLEOTIDE SEQUENCE [LARGE SCALE GENOMIC DNA]</scope>
    <source>
        <strain>972 / ATCC 24843</strain>
    </source>
</reference>
<reference key="3">
    <citation type="journal article" date="2000" name="EMBO J.">
        <title>Telomere-led bouquet formation facilitates homologous chromosome pairing and restricts ectopic interaction in fission yeast meiosis.</title>
        <authorList>
            <person name="Niwa O."/>
            <person name="Shimanuki M."/>
            <person name="Miki F."/>
        </authorList>
    </citation>
    <scope>SUBCELLULAR LOCATION</scope>
</reference>
<reference key="4">
    <citation type="journal article" date="2004" name="Mol. Genet. Genomics">
        <title>Two-hybrid search for proteins that interact with Sad1 and Kms1, two membrane-bound components of the spindle pole body in fission yeast.</title>
        <authorList>
            <person name="Miki F."/>
            <person name="Kurabayashi A."/>
            <person name="Tange Y."/>
            <person name="Okazaki K."/>
            <person name="Shimanuki M."/>
            <person name="Niwa O."/>
        </authorList>
    </citation>
    <scope>INTERACTION WITH SAD1</scope>
</reference>
<reference key="5">
    <citation type="journal article" date="2005" name="Curr. Biol.">
        <title>Hrs1p/Mcp6p on the meiotic SPB organizes astral microtubule arrays for oscillatory nuclear movement.</title>
        <authorList>
            <person name="Tanaka K."/>
            <person name="Kohda T."/>
            <person name="Yamashita A."/>
            <person name="Nonaka N."/>
            <person name="Yamamoto M."/>
        </authorList>
    </citation>
    <scope>INTERACTION WITH MCP6</scope>
</reference>
<reference key="6">
    <citation type="journal article" date="2005" name="J. Cell Sci.">
        <title>Mcp6, a meiosis-specific coiled-coil protein of Schizosaccharomyces pombe, localizes to the spindle pole body and is required for horsetail movement and recombination.</title>
        <authorList>
            <person name="Saito T.T."/>
            <person name="Tougan T."/>
            <person name="Okuzaki D."/>
            <person name="Kasama T."/>
            <person name="Nojima H."/>
        </authorList>
    </citation>
    <scope>SUBCELLULAR LOCATION</scope>
</reference>
<reference key="7">
    <citation type="journal article" date="2006" name="Nat. Biotechnol.">
        <title>ORFeome cloning and global analysis of protein localization in the fission yeast Schizosaccharomyces pombe.</title>
        <authorList>
            <person name="Matsuyama A."/>
            <person name="Arai R."/>
            <person name="Yashiroda Y."/>
            <person name="Shirai A."/>
            <person name="Kamata A."/>
            <person name="Sekido S."/>
            <person name="Kobayashi Y."/>
            <person name="Hashimoto A."/>
            <person name="Hamamoto M."/>
            <person name="Hiraoka Y."/>
            <person name="Horinouchi S."/>
            <person name="Yoshida M."/>
        </authorList>
    </citation>
    <scope>SUBCELLULAR LOCATION [LARGE SCALE ANALYSIS]</scope>
</reference>
<sequence length="607" mass="69241">MLNERDFDLIFDSYDFKHEGKVHLSNFLPIINDLQLLHPASAPPLLSEFQKQCTLEFVRQNADLSITKDNFRDVYKKLTENEDDSFANQAEKPSMEQQNSKNSIKEDANEHSVNSAHSKSSSNASPESLNPSQMMSKRLSLPPMSQFTDSDFVNILRTPFAQSTPLNRNTSSRNTEMPLVRKDKPDFSNGHHDLIKQITELQDMLDKARDQARKKSRTVDILEGKVNELTHQLNMADSKYNESKVANNSQNNQIKTLKAQNLNIHKNFQKIQSELIQTNSGLYSTKKELSALQVRYATLLRKFTDQTKKIEELSLAASRSSENENTIRRLALENHELKNSNNQLNNHIDDLTREKHLIALSNNPKGDEFLSPSNLDEMVYSKEVGLSFTQPSVCISIPAVGMRESEELRELEFKCKQQKKTIEECKHISQSLQSSLTAESSRNKELVAGFLMLSEEIGIQKWIIQSLSKMSPTLNDFCRRYDSSMPTYEESSHECTVLSSFSDDETGLMATNTTMNNSSKDFMASQDTVNADNPHFLATKGQPLLLLSVMKSNILRLFYVLFLFACFYGLDYILCAELLQAFLRVVFTFCEHIIILLYGRYELVQPS</sequence>
<accession>P87245</accession>